<reference key="1">
    <citation type="journal article" date="2004" name="Curr. Opin. Microbiol.">
        <title>Host cell invasion by the apicomplexans: the significance of microneme protein proteolysis.</title>
        <authorList>
            <person name="Dowse T."/>
            <person name="Soldati D."/>
        </authorList>
    </citation>
    <scope>NUCLEOTIDE SEQUENCE [MRNA]</scope>
    <source>
        <strain>RH</strain>
    </source>
</reference>
<reference key="2">
    <citation type="journal article" date="2005" name="Proc. Natl. Acad. Sci. U.S.A.">
        <title>A spatially localized rhomboid protease cleaves cell surface adhesins essential for invasion by Toxoplasma.</title>
        <authorList>
            <person name="Brossier F."/>
            <person name="Jewett T.J."/>
            <person name="Sibley L.D."/>
            <person name="Urban S."/>
        </authorList>
    </citation>
    <scope>NUCLEOTIDE SEQUENCE [MRNA]</scope>
    <scope>DEVELOPMENTAL STAGE</scope>
    <source>
        <strain>RH</strain>
        <tissue>Tachyzoite</tissue>
    </source>
</reference>
<accession>Q695T9</accession>
<accession>Q66TP2</accession>
<name>RHBL2_TOXGO</name>
<dbReference type="EC" id="3.4.21.105"/>
<dbReference type="EMBL" id="AY596192">
    <property type="protein sequence ID" value="AAT29066.1"/>
    <property type="molecule type" value="mRNA"/>
</dbReference>
<dbReference type="EMBL" id="AY704176">
    <property type="protein sequence ID" value="AAU11321.1"/>
    <property type="molecule type" value="mRNA"/>
</dbReference>
<dbReference type="SMR" id="Q695T9"/>
<dbReference type="MEROPS" id="S54.020"/>
<dbReference type="VEuPathDB" id="ToxoDB:TGARI_263290"/>
<dbReference type="VEuPathDB" id="ToxoDB:TGCAST_263290"/>
<dbReference type="VEuPathDB" id="ToxoDB:TGCOUG_263290"/>
<dbReference type="VEuPathDB" id="ToxoDB:TGDOM2_263290"/>
<dbReference type="VEuPathDB" id="ToxoDB:TGFOU_263290"/>
<dbReference type="VEuPathDB" id="ToxoDB:TGGT1_263290"/>
<dbReference type="VEuPathDB" id="ToxoDB:TGMAS_263290"/>
<dbReference type="VEuPathDB" id="ToxoDB:TGME49_263290"/>
<dbReference type="VEuPathDB" id="ToxoDB:TGP89_263290"/>
<dbReference type="VEuPathDB" id="ToxoDB:TGPRC2_263290"/>
<dbReference type="VEuPathDB" id="ToxoDB:TGRH88_067720"/>
<dbReference type="VEuPathDB" id="ToxoDB:TGRUB_263290A"/>
<dbReference type="VEuPathDB" id="ToxoDB:TGVAND_263290"/>
<dbReference type="VEuPathDB" id="ToxoDB:TGVEG_263290"/>
<dbReference type="GO" id="GO:0016020">
    <property type="term" value="C:membrane"/>
    <property type="evidence" value="ECO:0007669"/>
    <property type="project" value="UniProtKB-SubCell"/>
</dbReference>
<dbReference type="GO" id="GO:0004252">
    <property type="term" value="F:serine-type endopeptidase activity"/>
    <property type="evidence" value="ECO:0007669"/>
    <property type="project" value="InterPro"/>
</dbReference>
<dbReference type="GO" id="GO:0006508">
    <property type="term" value="P:proteolysis"/>
    <property type="evidence" value="ECO:0007669"/>
    <property type="project" value="UniProtKB-KW"/>
</dbReference>
<dbReference type="Gene3D" id="1.20.1540.10">
    <property type="entry name" value="Rhomboid-like"/>
    <property type="match status" value="1"/>
</dbReference>
<dbReference type="InterPro" id="IPR002610">
    <property type="entry name" value="Peptidase_S54_rhomboid-like"/>
</dbReference>
<dbReference type="InterPro" id="IPR022764">
    <property type="entry name" value="Peptidase_S54_rhomboid_dom"/>
</dbReference>
<dbReference type="InterPro" id="IPR035952">
    <property type="entry name" value="Rhomboid-like_sf"/>
</dbReference>
<dbReference type="PANTHER" id="PTHR22936:SF69">
    <property type="entry name" value="RHOMBOID-LIKE PROTEIN"/>
    <property type="match status" value="1"/>
</dbReference>
<dbReference type="PANTHER" id="PTHR22936">
    <property type="entry name" value="RHOMBOID-RELATED"/>
    <property type="match status" value="1"/>
</dbReference>
<dbReference type="Pfam" id="PF01694">
    <property type="entry name" value="Rhomboid"/>
    <property type="match status" value="1"/>
</dbReference>
<dbReference type="SUPFAM" id="SSF144091">
    <property type="entry name" value="Rhomboid-like"/>
    <property type="match status" value="1"/>
</dbReference>
<gene>
    <name type="primary">ROM2</name>
</gene>
<organism>
    <name type="scientific">Toxoplasma gondii</name>
    <dbReference type="NCBI Taxonomy" id="5811"/>
    <lineage>
        <taxon>Eukaryota</taxon>
        <taxon>Sar</taxon>
        <taxon>Alveolata</taxon>
        <taxon>Apicomplexa</taxon>
        <taxon>Conoidasida</taxon>
        <taxon>Coccidia</taxon>
        <taxon>Eucoccidiorida</taxon>
        <taxon>Eimeriorina</taxon>
        <taxon>Sarcocystidae</taxon>
        <taxon>Toxoplasma</taxon>
    </lineage>
</organism>
<feature type="chain" id="PRO_0000239075" description="Rhomboid-like protease 2">
    <location>
        <begin position="1"/>
        <end position="283"/>
    </location>
</feature>
<feature type="transmembrane region" description="Helical" evidence="2">
    <location>
        <begin position="62"/>
        <end position="82"/>
    </location>
</feature>
<feature type="transmembrane region" description="Helical" evidence="2">
    <location>
        <begin position="114"/>
        <end position="134"/>
    </location>
</feature>
<feature type="transmembrane region" description="Helical" evidence="2">
    <location>
        <begin position="149"/>
        <end position="169"/>
    </location>
</feature>
<feature type="transmembrane region" description="Helical" evidence="2">
    <location>
        <begin position="179"/>
        <end position="199"/>
    </location>
</feature>
<feature type="transmembrane region" description="Helical" evidence="2">
    <location>
        <begin position="205"/>
        <end position="225"/>
    </location>
</feature>
<feature type="transmembrane region" description="Helical" evidence="2">
    <location>
        <begin position="227"/>
        <end position="247"/>
    </location>
</feature>
<feature type="transmembrane region" description="Helical" evidence="2">
    <location>
        <begin position="260"/>
        <end position="280"/>
    </location>
</feature>
<feature type="region of interest" description="Disordered" evidence="3">
    <location>
        <begin position="1"/>
        <end position="26"/>
    </location>
</feature>
<feature type="compositionally biased region" description="Polar residues" evidence="3">
    <location>
        <begin position="1"/>
        <end position="11"/>
    </location>
</feature>
<feature type="active site" description="Nucleophile" evidence="1">
    <location>
        <position position="178"/>
    </location>
</feature>
<feature type="active site" evidence="1">
    <location>
        <position position="230"/>
    </location>
</feature>
<feature type="sequence conflict" description="In Ref. 2; AAU11321." evidence="5" ref="2">
    <original>Q</original>
    <variation>QQ</variation>
    <location>
        <position position="172"/>
    </location>
</feature>
<evidence type="ECO:0000250" key="1"/>
<evidence type="ECO:0000255" key="2"/>
<evidence type="ECO:0000256" key="3">
    <source>
        <dbReference type="SAM" id="MobiDB-lite"/>
    </source>
</evidence>
<evidence type="ECO:0000269" key="4">
    <source>
    </source>
</evidence>
<evidence type="ECO:0000305" key="5"/>
<proteinExistence type="evidence at transcript level"/>
<sequence length="283" mass="30663">MANIRTLSDYASSPPRGSSALEGEVGQGGSPLPLFFPSGTQSGENVSWIQWLCPGIHLKSPIIIISFVQIAVYIASLAAGLAPNEILAPTPQTLVMFGANIPELIRVGEIWRLICPLFLHLNLFHILMNLWVQIRIGLTMEEKYGWKMLLAVYFGVGVLANMISAAVLFCGQMKAGASTAVFALIGVQLAELALIWHAIQDRNSAIISVCICLFFVFVSSFGSHMDSVGHIGGLVMGFAAGIWLNENSDIKPTWYDRARLTSQVALAAAPILSCIFIFLVPRC</sequence>
<protein>
    <recommendedName>
        <fullName>Rhomboid-like protease 2</fullName>
        <ecNumber>3.4.21.105</ecNumber>
    </recommendedName>
</protein>
<keyword id="KW-0378">Hydrolase</keyword>
<keyword id="KW-0472">Membrane</keyword>
<keyword id="KW-0645">Protease</keyword>
<keyword id="KW-0720">Serine protease</keyword>
<keyword id="KW-0812">Transmembrane</keyword>
<keyword id="KW-1133">Transmembrane helix</keyword>
<comment type="function">
    <text evidence="1">Serine protease involved in intramembrane proteolysis and the subsequent release of polypeptides from their membrane anchors.</text>
</comment>
<comment type="catalytic activity">
    <reaction>
        <text>Cleaves type-1 transmembrane domains using a catalytic dyad composed of serine and histidine that are contributed by different transmembrane domains.</text>
        <dbReference type="EC" id="3.4.21.105"/>
    </reaction>
</comment>
<comment type="subcellular location">
    <subcellularLocation>
        <location evidence="5">Membrane</location>
        <topology evidence="5">Multi-pass membrane protein</topology>
    </subcellularLocation>
</comment>
<comment type="developmental stage">
    <text evidence="4">Detected in sporozoites.</text>
</comment>
<comment type="similarity">
    <text evidence="5">Belongs to the peptidase S54 family.</text>
</comment>